<sequence>MAAYLLAVAILFCIQGWPLGTVQGQVMPFMEVYRHSVCQPRETLVSILEEYPGEIAHIFRPSCVTALRCGGCCTDESLECTATGKRSVGREIMRLSPHKGTSEKEVMQFTEHTDCECRPRSASGVNSRKHKRNPEEGEQRAKFPFV</sequence>
<evidence type="ECO:0000250" key="1">
    <source>
        <dbReference type="UniProtKB" id="P0DL42"/>
    </source>
</evidence>
<evidence type="ECO:0000250" key="2">
    <source>
        <dbReference type="UniProtKB" id="P67862"/>
    </source>
</evidence>
<evidence type="ECO:0000250" key="3">
    <source>
        <dbReference type="UniProtKB" id="P67863"/>
    </source>
</evidence>
<evidence type="ECO:0000250" key="4">
    <source>
        <dbReference type="UniProtKB" id="P83942"/>
    </source>
</evidence>
<evidence type="ECO:0000250" key="5">
    <source>
        <dbReference type="UniProtKB" id="Q330K6"/>
    </source>
</evidence>
<evidence type="ECO:0000255" key="6"/>
<evidence type="ECO:0000256" key="7">
    <source>
        <dbReference type="SAM" id="MobiDB-lite"/>
    </source>
</evidence>
<evidence type="ECO:0000305" key="8"/>
<evidence type="ECO:0000305" key="9">
    <source>
    </source>
</evidence>
<comment type="function">
    <text evidence="2 4 5">Snake venom VEGFs that may contribute to venom dispersion and prey subjugation by inducing vascular permeability and hypotension. This protein induces an increase in capillary permeability after intradermal injection, as well as a drastic hypotensive effect after intravenous injection (By similarity). The hypotension is mediated by nitric oxide (NO), which is produced by VEGF-activated endothelium NO synthase. Also induces angiogenesis in vitro (By similarity). Like other crotalid VEGFs, this protein interacts with VEGF receptor-1 (FLT1) with a high affinity, whereas it binds to VEGF receptor-2 (KDR) with a low affinity (By similarity).</text>
</comment>
<comment type="subunit">
    <text evidence="2">Homodimer; disulfide-linked. Interacts with VEGF receptor-1 (FLT1) with a high affinity, whereas it binds to VEGF receptor-2 (KDR) with a low affinity. Does not bind VEGF receptor-3 (FLT4).</text>
</comment>
<comment type="subcellular location">
    <subcellularLocation>
        <location evidence="9">Secreted</location>
    </subcellularLocation>
</comment>
<comment type="tissue specificity">
    <text evidence="9">Expressed by the venom gland.</text>
</comment>
<comment type="similarity">
    <text evidence="8">Belongs to the PDGF/VEGF growth factor family. Snake venom VEGF subfamily.</text>
</comment>
<reference key="1">
    <citation type="journal article" date="2004" name="Toxicon">
        <title>Identification and cloning of snake venom vascular endothelial growth factor (svVEGF) from Bothrops erythromelas pitviper.</title>
        <authorList>
            <person name="Junqueira-de-Azevedo I.L.M."/>
            <person name="da Silva M.B."/>
            <person name="Chudzinski-Tavassi A.M."/>
            <person name="Ho P.L."/>
        </authorList>
    </citation>
    <scope>NUCLEOTIDE SEQUENCE [MRNA]</scope>
    <source>
        <tissue>Venom gland</tissue>
    </source>
</reference>
<keyword id="KW-1015">Disulfide bond</keyword>
<keyword id="KW-0339">Growth factor</keyword>
<keyword id="KW-0873">Pyrrolidone carboxylic acid</keyword>
<keyword id="KW-0964">Secreted</keyword>
<keyword id="KW-0732">Signal</keyword>
<keyword id="KW-0800">Toxin</keyword>
<protein>
    <recommendedName>
        <fullName>Snake venom vascular endothelial growth factor toxin</fullName>
        <shortName>svVEGF</shortName>
    </recommendedName>
    <alternativeName>
        <fullName evidence="1">VEGF-F</fullName>
    </alternativeName>
</protein>
<organism>
    <name type="scientific">Bothrops erythromelas</name>
    <name type="common">Caatinga lance head</name>
    <dbReference type="NCBI Taxonomy" id="44710"/>
    <lineage>
        <taxon>Eukaryota</taxon>
        <taxon>Metazoa</taxon>
        <taxon>Chordata</taxon>
        <taxon>Craniata</taxon>
        <taxon>Vertebrata</taxon>
        <taxon>Euteleostomi</taxon>
        <taxon>Lepidosauria</taxon>
        <taxon>Squamata</taxon>
        <taxon>Bifurcata</taxon>
        <taxon>Unidentata</taxon>
        <taxon>Episquamata</taxon>
        <taxon>Toxicofera</taxon>
        <taxon>Serpentes</taxon>
        <taxon>Colubroidea</taxon>
        <taxon>Viperidae</taxon>
        <taxon>Crotalinae</taxon>
        <taxon>Bothrops</taxon>
    </lineage>
</organism>
<name>TXVE_BOTER</name>
<proteinExistence type="evidence at transcript level"/>
<feature type="signal peptide" evidence="6">
    <location>
        <begin position="1"/>
        <end position="24"/>
    </location>
</feature>
<feature type="chain" id="PRO_0000023424" description="Snake venom vascular endothelial growth factor toxin">
    <location>
        <begin position="25"/>
        <end position="146"/>
    </location>
</feature>
<feature type="region of interest" description="Disordered" evidence="7">
    <location>
        <begin position="118"/>
        <end position="146"/>
    </location>
</feature>
<feature type="compositionally biased region" description="Basic and acidic residues" evidence="7">
    <location>
        <begin position="133"/>
        <end position="146"/>
    </location>
</feature>
<feature type="modified residue" description="Pyrrolidone carboxylic acid" evidence="4">
    <location>
        <position position="25"/>
    </location>
</feature>
<feature type="disulfide bond" evidence="3">
    <location>
        <begin position="38"/>
        <end position="80"/>
    </location>
</feature>
<feature type="disulfide bond" description="Interchain (with C-72)" evidence="3">
    <location>
        <position position="63"/>
    </location>
</feature>
<feature type="disulfide bond" evidence="3">
    <location>
        <begin position="69"/>
        <end position="115"/>
    </location>
</feature>
<feature type="disulfide bond" description="Interchain (with C-63)" evidence="3">
    <location>
        <position position="72"/>
    </location>
</feature>
<feature type="disulfide bond" evidence="3">
    <location>
        <begin position="73"/>
        <end position="117"/>
    </location>
</feature>
<accession>Q6J936</accession>
<dbReference type="EMBL" id="AY569310">
    <property type="protein sequence ID" value="AAT11786.1"/>
    <property type="molecule type" value="mRNA"/>
</dbReference>
<dbReference type="SMR" id="Q6J936"/>
<dbReference type="GO" id="GO:0005615">
    <property type="term" value="C:extracellular space"/>
    <property type="evidence" value="ECO:0007669"/>
    <property type="project" value="TreeGrafter"/>
</dbReference>
<dbReference type="GO" id="GO:0016020">
    <property type="term" value="C:membrane"/>
    <property type="evidence" value="ECO:0007669"/>
    <property type="project" value="InterPro"/>
</dbReference>
<dbReference type="GO" id="GO:0042056">
    <property type="term" value="F:chemoattractant activity"/>
    <property type="evidence" value="ECO:0007669"/>
    <property type="project" value="TreeGrafter"/>
</dbReference>
<dbReference type="GO" id="GO:0008083">
    <property type="term" value="F:growth factor activity"/>
    <property type="evidence" value="ECO:0007669"/>
    <property type="project" value="UniProtKB-KW"/>
</dbReference>
<dbReference type="GO" id="GO:0090729">
    <property type="term" value="F:toxin activity"/>
    <property type="evidence" value="ECO:0007669"/>
    <property type="project" value="UniProtKB-KW"/>
</dbReference>
<dbReference type="GO" id="GO:0005172">
    <property type="term" value="F:vascular endothelial growth factor receptor binding"/>
    <property type="evidence" value="ECO:0007669"/>
    <property type="project" value="TreeGrafter"/>
</dbReference>
<dbReference type="GO" id="GO:0050930">
    <property type="term" value="P:induction of positive chemotaxis"/>
    <property type="evidence" value="ECO:0007669"/>
    <property type="project" value="TreeGrafter"/>
</dbReference>
<dbReference type="GO" id="GO:0045766">
    <property type="term" value="P:positive regulation of angiogenesis"/>
    <property type="evidence" value="ECO:0007669"/>
    <property type="project" value="TreeGrafter"/>
</dbReference>
<dbReference type="GO" id="GO:0001938">
    <property type="term" value="P:positive regulation of endothelial cell proliferation"/>
    <property type="evidence" value="ECO:0007669"/>
    <property type="project" value="TreeGrafter"/>
</dbReference>
<dbReference type="GO" id="GO:0060754">
    <property type="term" value="P:positive regulation of mast cell chemotaxis"/>
    <property type="evidence" value="ECO:0007669"/>
    <property type="project" value="TreeGrafter"/>
</dbReference>
<dbReference type="GO" id="GO:0001666">
    <property type="term" value="P:response to hypoxia"/>
    <property type="evidence" value="ECO:0007669"/>
    <property type="project" value="TreeGrafter"/>
</dbReference>
<dbReference type="GO" id="GO:0002040">
    <property type="term" value="P:sprouting angiogenesis"/>
    <property type="evidence" value="ECO:0007669"/>
    <property type="project" value="TreeGrafter"/>
</dbReference>
<dbReference type="GO" id="GO:0048010">
    <property type="term" value="P:vascular endothelial growth factor receptor signaling pathway"/>
    <property type="evidence" value="ECO:0007669"/>
    <property type="project" value="TreeGrafter"/>
</dbReference>
<dbReference type="GO" id="GO:0038084">
    <property type="term" value="P:vascular endothelial growth factor signaling pathway"/>
    <property type="evidence" value="ECO:0007669"/>
    <property type="project" value="TreeGrafter"/>
</dbReference>
<dbReference type="CDD" id="cd00135">
    <property type="entry name" value="PDGF"/>
    <property type="match status" value="1"/>
</dbReference>
<dbReference type="FunFam" id="2.10.90.10:FF:000030">
    <property type="entry name" value="Vascular endothelial growth factor B"/>
    <property type="match status" value="1"/>
</dbReference>
<dbReference type="Gene3D" id="2.10.90.10">
    <property type="entry name" value="Cystine-knot cytokines"/>
    <property type="match status" value="1"/>
</dbReference>
<dbReference type="InterPro" id="IPR029034">
    <property type="entry name" value="Cystine-knot_cytokine"/>
</dbReference>
<dbReference type="InterPro" id="IPR023581">
    <property type="entry name" value="PD_growth_factor_CS"/>
</dbReference>
<dbReference type="InterPro" id="IPR000072">
    <property type="entry name" value="PDGF/VEGF_dom"/>
</dbReference>
<dbReference type="InterPro" id="IPR050507">
    <property type="entry name" value="PDGF/VEGF_growth_factor"/>
</dbReference>
<dbReference type="PANTHER" id="PTHR12025">
    <property type="entry name" value="VASCULAR ENDOTHELIAL GROWTH FACTOR"/>
    <property type="match status" value="1"/>
</dbReference>
<dbReference type="PANTHER" id="PTHR12025:SF5">
    <property type="entry name" value="VASCULAR ENDOTHELIAL GROWTH FACTOR A, LONG FORM"/>
    <property type="match status" value="1"/>
</dbReference>
<dbReference type="Pfam" id="PF00341">
    <property type="entry name" value="PDGF"/>
    <property type="match status" value="1"/>
</dbReference>
<dbReference type="SMART" id="SM00141">
    <property type="entry name" value="PDGF"/>
    <property type="match status" value="1"/>
</dbReference>
<dbReference type="SUPFAM" id="SSF57501">
    <property type="entry name" value="Cystine-knot cytokines"/>
    <property type="match status" value="1"/>
</dbReference>
<dbReference type="PROSITE" id="PS00249">
    <property type="entry name" value="PDGF_1"/>
    <property type="match status" value="1"/>
</dbReference>
<dbReference type="PROSITE" id="PS50278">
    <property type="entry name" value="PDGF_2"/>
    <property type="match status" value="1"/>
</dbReference>